<keyword id="KW-0963">Cytoplasm</keyword>
<keyword id="KW-0276">Fatty acid metabolism</keyword>
<keyword id="KW-0413">Isomerase</keyword>
<keyword id="KW-0442">Lipid degradation</keyword>
<keyword id="KW-0443">Lipid metabolism</keyword>
<keyword id="KW-0456">Lyase</keyword>
<keyword id="KW-0511">Multifunctional enzyme</keyword>
<keyword id="KW-0520">NAD</keyword>
<keyword id="KW-0560">Oxidoreductase</keyword>
<sequence length="706" mass="75958">MEKTFNLTRRDDGIAILTMDVPGETMNTLKAQFGPEISEILAEIKSDPHIRGLVLISGKKDSFVAGADISMLDACKTAGDAKALSQQGHVVFNELEALKIPVVAAIHGACLGGGLELALACHQRVCSDDGKTMLGVPEVQLGLLPGGGGTQRLPRLVGITTALDMMLTGKQIRSKQALKMGLVNDVVPQTILLQTAVEMALTGKRAPKPVKKSLVNQVLEGTSFGRNIIFDQATKQVEKKTQGNYPAPAKIIDCVRQGIAKGMQKGLEVEASHFAELVVSKESEALRSIFFATTEMKKETGAEGATPRKVKKAVILGGGLMGGGIASVTTTKAKIPVRVKDISEKGLSNALAYAYKLLDKGVKRRHMTPAARDNLMALMTTTTEYKGVKDADIIVEAVFEDLALKHQMVKDIERECGEHTIFASNTSSLPISQIAEAATRPENVIGLHYFSPVEKMPLVEVIAHAKTSPETIATTVAFARKQGKTPIVVQDGAGFYVNRILALYMNEAAQLLLEGQSVEHLDKALVKFGFPVGPITLLDEVGIDVGAKISPILEKELGERFKAPAAFDKLLGDDRKGRKNGKGFYQYGASSKKTKAVDETVYGVLGIKPGTNKDAKALAERCVVQMLNEAVRCLDDGIIASPRDGDIGAIFGIGFPPFLGGPFHYIDTLGAANLVKILESYQSQFGNRFEPCERLKTMARENVSFF</sequence>
<reference key="1">
    <citation type="submission" date="2006-12" db="EMBL/GenBank/DDBJ databases">
        <title>Complete sequence of Shewanella sp. W3-18-1.</title>
        <authorList>
            <consortium name="US DOE Joint Genome Institute"/>
            <person name="Copeland A."/>
            <person name="Lucas S."/>
            <person name="Lapidus A."/>
            <person name="Barry K."/>
            <person name="Detter J.C."/>
            <person name="Glavina del Rio T."/>
            <person name="Hammon N."/>
            <person name="Israni S."/>
            <person name="Dalin E."/>
            <person name="Tice H."/>
            <person name="Pitluck S."/>
            <person name="Chain P."/>
            <person name="Malfatti S."/>
            <person name="Shin M."/>
            <person name="Vergez L."/>
            <person name="Schmutz J."/>
            <person name="Larimer F."/>
            <person name="Land M."/>
            <person name="Hauser L."/>
            <person name="Kyrpides N."/>
            <person name="Lykidis A."/>
            <person name="Tiedje J."/>
            <person name="Richardson P."/>
        </authorList>
    </citation>
    <scope>NUCLEOTIDE SEQUENCE [LARGE SCALE GENOMIC DNA]</scope>
    <source>
        <strain>W3-18-1</strain>
    </source>
</reference>
<protein>
    <recommendedName>
        <fullName evidence="1">Fatty acid oxidation complex subunit alpha</fullName>
    </recommendedName>
    <domain>
        <recommendedName>
            <fullName evidence="1">Enoyl-CoA hydratase/3-hydroxybutyryl-CoA epimerase</fullName>
            <ecNumber evidence="1">4.2.1.17</ecNumber>
            <ecNumber evidence="1">5.1.2.3</ecNumber>
        </recommendedName>
    </domain>
    <domain>
        <recommendedName>
            <fullName evidence="1">3-hydroxyacyl-CoA dehydrogenase</fullName>
            <ecNumber evidence="1">1.1.1.35</ecNumber>
        </recommendedName>
    </domain>
</protein>
<evidence type="ECO:0000255" key="1">
    <source>
        <dbReference type="HAMAP-Rule" id="MF_01617"/>
    </source>
</evidence>
<name>FADJ_SHESW</name>
<feature type="chain" id="PRO_0000323531" description="Fatty acid oxidation complex subunit alpha">
    <location>
        <begin position="1"/>
        <end position="706"/>
    </location>
</feature>
<feature type="region of interest" description="Enoyl-CoA hydratase" evidence="1">
    <location>
        <begin position="1"/>
        <end position="188"/>
    </location>
</feature>
<feature type="region of interest" description="3-hydroxyacyl-CoA dehydrogenase" evidence="1">
    <location>
        <begin position="308"/>
        <end position="706"/>
    </location>
</feature>
<feature type="site" description="Important for catalytic activity" evidence="1">
    <location>
        <position position="116"/>
    </location>
</feature>
<feature type="site" description="Important for catalytic activity" evidence="1">
    <location>
        <position position="138"/>
    </location>
</feature>
<dbReference type="EC" id="4.2.1.17" evidence="1"/>
<dbReference type="EC" id="5.1.2.3" evidence="1"/>
<dbReference type="EC" id="1.1.1.35" evidence="1"/>
<dbReference type="EMBL" id="CP000503">
    <property type="protein sequence ID" value="ABM24387.1"/>
    <property type="molecule type" value="Genomic_DNA"/>
</dbReference>
<dbReference type="RefSeq" id="WP_011788888.1">
    <property type="nucleotide sequence ID" value="NC_008750.1"/>
</dbReference>
<dbReference type="SMR" id="A1RI92"/>
<dbReference type="KEGG" id="shw:Sputw3181_1549"/>
<dbReference type="HOGENOM" id="CLU_009834_16_1_6"/>
<dbReference type="UniPathway" id="UPA00659"/>
<dbReference type="Proteomes" id="UP000002597">
    <property type="component" value="Chromosome"/>
</dbReference>
<dbReference type="GO" id="GO:0005737">
    <property type="term" value="C:cytoplasm"/>
    <property type="evidence" value="ECO:0007669"/>
    <property type="project" value="UniProtKB-SubCell"/>
</dbReference>
<dbReference type="GO" id="GO:0008692">
    <property type="term" value="F:3-hydroxybutyryl-CoA epimerase activity"/>
    <property type="evidence" value="ECO:0007669"/>
    <property type="project" value="UniProtKB-UniRule"/>
</dbReference>
<dbReference type="GO" id="GO:0004300">
    <property type="term" value="F:enoyl-CoA hydratase activity"/>
    <property type="evidence" value="ECO:0007669"/>
    <property type="project" value="UniProtKB-UniRule"/>
</dbReference>
<dbReference type="GO" id="GO:0016509">
    <property type="term" value="F:long-chain-3-hydroxyacyl-CoA dehydrogenase activity"/>
    <property type="evidence" value="ECO:0007669"/>
    <property type="project" value="TreeGrafter"/>
</dbReference>
<dbReference type="GO" id="GO:0070403">
    <property type="term" value="F:NAD+ binding"/>
    <property type="evidence" value="ECO:0007669"/>
    <property type="project" value="InterPro"/>
</dbReference>
<dbReference type="GO" id="GO:0006635">
    <property type="term" value="P:fatty acid beta-oxidation"/>
    <property type="evidence" value="ECO:0007669"/>
    <property type="project" value="UniProtKB-UniRule"/>
</dbReference>
<dbReference type="CDD" id="cd06558">
    <property type="entry name" value="crotonase-like"/>
    <property type="match status" value="1"/>
</dbReference>
<dbReference type="FunFam" id="1.10.1040.50:FF:000003">
    <property type="entry name" value="Fatty acid oxidation complex subunit alpha"/>
    <property type="match status" value="1"/>
</dbReference>
<dbReference type="FunFam" id="3.90.226.10:FF:000011">
    <property type="entry name" value="Fatty acid oxidation complex subunit alpha"/>
    <property type="match status" value="1"/>
</dbReference>
<dbReference type="FunFam" id="3.40.50.720:FF:000009">
    <property type="entry name" value="Fatty oxidation complex, alpha subunit"/>
    <property type="match status" value="1"/>
</dbReference>
<dbReference type="Gene3D" id="1.10.1040.50">
    <property type="match status" value="1"/>
</dbReference>
<dbReference type="Gene3D" id="3.90.226.10">
    <property type="entry name" value="2-enoyl-CoA Hydratase, Chain A, domain 1"/>
    <property type="match status" value="1"/>
</dbReference>
<dbReference type="Gene3D" id="3.40.50.720">
    <property type="entry name" value="NAD(P)-binding Rossmann-like Domain"/>
    <property type="match status" value="1"/>
</dbReference>
<dbReference type="HAMAP" id="MF_01617">
    <property type="entry name" value="FadJ"/>
    <property type="match status" value="1"/>
</dbReference>
<dbReference type="InterPro" id="IPR006176">
    <property type="entry name" value="3-OHacyl-CoA_DH_NAD-bd"/>
</dbReference>
<dbReference type="InterPro" id="IPR006108">
    <property type="entry name" value="3HC_DH_C"/>
</dbReference>
<dbReference type="InterPro" id="IPR008927">
    <property type="entry name" value="6-PGluconate_DH-like_C_sf"/>
</dbReference>
<dbReference type="InterPro" id="IPR029045">
    <property type="entry name" value="ClpP/crotonase-like_dom_sf"/>
</dbReference>
<dbReference type="InterPro" id="IPR001753">
    <property type="entry name" value="Enoyl-CoA_hydra/iso"/>
</dbReference>
<dbReference type="InterPro" id="IPR050136">
    <property type="entry name" value="FA_oxidation_alpha_subunit"/>
</dbReference>
<dbReference type="InterPro" id="IPR012802">
    <property type="entry name" value="FadJ"/>
</dbReference>
<dbReference type="InterPro" id="IPR036291">
    <property type="entry name" value="NAD(P)-bd_dom_sf"/>
</dbReference>
<dbReference type="NCBIfam" id="TIGR02440">
    <property type="entry name" value="FadJ"/>
    <property type="match status" value="1"/>
</dbReference>
<dbReference type="NCBIfam" id="NF008363">
    <property type="entry name" value="PRK11154.1"/>
    <property type="match status" value="1"/>
</dbReference>
<dbReference type="PANTHER" id="PTHR43612">
    <property type="entry name" value="TRIFUNCTIONAL ENZYME SUBUNIT ALPHA"/>
    <property type="match status" value="1"/>
</dbReference>
<dbReference type="PANTHER" id="PTHR43612:SF3">
    <property type="entry name" value="TRIFUNCTIONAL ENZYME SUBUNIT ALPHA, MITOCHONDRIAL"/>
    <property type="match status" value="1"/>
</dbReference>
<dbReference type="Pfam" id="PF00725">
    <property type="entry name" value="3HCDH"/>
    <property type="match status" value="2"/>
</dbReference>
<dbReference type="Pfam" id="PF02737">
    <property type="entry name" value="3HCDH_N"/>
    <property type="match status" value="1"/>
</dbReference>
<dbReference type="Pfam" id="PF00378">
    <property type="entry name" value="ECH_1"/>
    <property type="match status" value="1"/>
</dbReference>
<dbReference type="SUPFAM" id="SSF48179">
    <property type="entry name" value="6-phosphogluconate dehydrogenase C-terminal domain-like"/>
    <property type="match status" value="2"/>
</dbReference>
<dbReference type="SUPFAM" id="SSF52096">
    <property type="entry name" value="ClpP/crotonase"/>
    <property type="match status" value="1"/>
</dbReference>
<dbReference type="SUPFAM" id="SSF51735">
    <property type="entry name" value="NAD(P)-binding Rossmann-fold domains"/>
    <property type="match status" value="1"/>
</dbReference>
<gene>
    <name evidence="1" type="primary">fadJ</name>
    <name type="ordered locus">Sputw3181_1549</name>
</gene>
<proteinExistence type="inferred from homology"/>
<accession>A1RI92</accession>
<comment type="function">
    <text evidence="1">Catalyzes the formation of a hydroxyacyl-CoA by addition of water on enoyl-CoA. Also exhibits 3-hydroxyacyl-CoA epimerase and 3-hydroxyacyl-CoA dehydrogenase activities.</text>
</comment>
<comment type="catalytic activity">
    <reaction evidence="1">
        <text>a (3S)-3-hydroxyacyl-CoA = a (2E)-enoyl-CoA + H2O</text>
        <dbReference type="Rhea" id="RHEA:16105"/>
        <dbReference type="ChEBI" id="CHEBI:15377"/>
        <dbReference type="ChEBI" id="CHEBI:57318"/>
        <dbReference type="ChEBI" id="CHEBI:58856"/>
        <dbReference type="EC" id="4.2.1.17"/>
    </reaction>
</comment>
<comment type="catalytic activity">
    <reaction evidence="1">
        <text>a 4-saturated-(3S)-3-hydroxyacyl-CoA = a (3E)-enoyl-CoA + H2O</text>
        <dbReference type="Rhea" id="RHEA:20724"/>
        <dbReference type="ChEBI" id="CHEBI:15377"/>
        <dbReference type="ChEBI" id="CHEBI:58521"/>
        <dbReference type="ChEBI" id="CHEBI:137480"/>
        <dbReference type="EC" id="4.2.1.17"/>
    </reaction>
</comment>
<comment type="catalytic activity">
    <reaction evidence="1">
        <text>a (3S)-3-hydroxyacyl-CoA + NAD(+) = a 3-oxoacyl-CoA + NADH + H(+)</text>
        <dbReference type="Rhea" id="RHEA:22432"/>
        <dbReference type="ChEBI" id="CHEBI:15378"/>
        <dbReference type="ChEBI" id="CHEBI:57318"/>
        <dbReference type="ChEBI" id="CHEBI:57540"/>
        <dbReference type="ChEBI" id="CHEBI:57945"/>
        <dbReference type="ChEBI" id="CHEBI:90726"/>
        <dbReference type="EC" id="1.1.1.35"/>
    </reaction>
</comment>
<comment type="catalytic activity">
    <reaction evidence="1">
        <text>(3S)-3-hydroxybutanoyl-CoA = (3R)-3-hydroxybutanoyl-CoA</text>
        <dbReference type="Rhea" id="RHEA:21760"/>
        <dbReference type="ChEBI" id="CHEBI:57315"/>
        <dbReference type="ChEBI" id="CHEBI:57316"/>
        <dbReference type="EC" id="5.1.2.3"/>
    </reaction>
</comment>
<comment type="pathway">
    <text evidence="1">Lipid metabolism; fatty acid beta-oxidation.</text>
</comment>
<comment type="subunit">
    <text evidence="1">Heterotetramer of two alpha chains (FadJ) and two beta chains (FadI).</text>
</comment>
<comment type="subcellular location">
    <subcellularLocation>
        <location evidence="1">Cytoplasm</location>
    </subcellularLocation>
</comment>
<comment type="similarity">
    <text evidence="1">In the N-terminal section; belongs to the enoyl-CoA hydratase/isomerase family.</text>
</comment>
<comment type="similarity">
    <text evidence="1">In the central section; belongs to the 3-hydroxyacyl-CoA dehydrogenase family.</text>
</comment>
<organism>
    <name type="scientific">Shewanella sp. (strain W3-18-1)</name>
    <dbReference type="NCBI Taxonomy" id="351745"/>
    <lineage>
        <taxon>Bacteria</taxon>
        <taxon>Pseudomonadati</taxon>
        <taxon>Pseudomonadota</taxon>
        <taxon>Gammaproteobacteria</taxon>
        <taxon>Alteromonadales</taxon>
        <taxon>Shewanellaceae</taxon>
        <taxon>Shewanella</taxon>
    </lineage>
</organism>